<keyword id="KW-0378">Hydrolase</keyword>
<keyword id="KW-0511">Multifunctional enzyme</keyword>
<keyword id="KW-0658">Purine biosynthesis</keyword>
<keyword id="KW-0808">Transferase</keyword>
<reference key="1">
    <citation type="journal article" date="2009" name="PLoS ONE">
        <title>Salmonella paratyphi C: genetic divergence from Salmonella choleraesuis and pathogenic convergence with Salmonella typhi.</title>
        <authorList>
            <person name="Liu W.-Q."/>
            <person name="Feng Y."/>
            <person name="Wang Y."/>
            <person name="Zou Q.-H."/>
            <person name="Chen F."/>
            <person name="Guo J.-T."/>
            <person name="Peng Y.-H."/>
            <person name="Jin Y."/>
            <person name="Li Y.-G."/>
            <person name="Hu S.-N."/>
            <person name="Johnston R.N."/>
            <person name="Liu G.-R."/>
            <person name="Liu S.-L."/>
        </authorList>
    </citation>
    <scope>NUCLEOTIDE SEQUENCE [LARGE SCALE GENOMIC DNA]</scope>
    <source>
        <strain>RKS4594</strain>
    </source>
</reference>
<dbReference type="EC" id="2.1.2.3" evidence="1"/>
<dbReference type="EC" id="3.5.4.10" evidence="1"/>
<dbReference type="EMBL" id="CP000857">
    <property type="protein sequence ID" value="ACN48074.1"/>
    <property type="molecule type" value="Genomic_DNA"/>
</dbReference>
<dbReference type="RefSeq" id="WP_001187496.1">
    <property type="nucleotide sequence ID" value="NC_012125.1"/>
</dbReference>
<dbReference type="SMR" id="C0Q2T8"/>
<dbReference type="KEGG" id="sei:SPC_4007"/>
<dbReference type="HOGENOM" id="CLU_016316_5_2_6"/>
<dbReference type="UniPathway" id="UPA00074">
    <property type="reaction ID" value="UER00133"/>
</dbReference>
<dbReference type="UniPathway" id="UPA00074">
    <property type="reaction ID" value="UER00135"/>
</dbReference>
<dbReference type="Proteomes" id="UP000001599">
    <property type="component" value="Chromosome"/>
</dbReference>
<dbReference type="GO" id="GO:0005829">
    <property type="term" value="C:cytosol"/>
    <property type="evidence" value="ECO:0007669"/>
    <property type="project" value="TreeGrafter"/>
</dbReference>
<dbReference type="GO" id="GO:0003937">
    <property type="term" value="F:IMP cyclohydrolase activity"/>
    <property type="evidence" value="ECO:0007669"/>
    <property type="project" value="UniProtKB-UniRule"/>
</dbReference>
<dbReference type="GO" id="GO:0004643">
    <property type="term" value="F:phosphoribosylaminoimidazolecarboxamide formyltransferase activity"/>
    <property type="evidence" value="ECO:0007669"/>
    <property type="project" value="UniProtKB-UniRule"/>
</dbReference>
<dbReference type="GO" id="GO:0006189">
    <property type="term" value="P:'de novo' IMP biosynthetic process"/>
    <property type="evidence" value="ECO:0007669"/>
    <property type="project" value="UniProtKB-UniRule"/>
</dbReference>
<dbReference type="CDD" id="cd01421">
    <property type="entry name" value="IMPCH"/>
    <property type="match status" value="1"/>
</dbReference>
<dbReference type="FunFam" id="3.40.140.20:FF:000001">
    <property type="entry name" value="Bifunctional purine biosynthesis protein PurH"/>
    <property type="match status" value="1"/>
</dbReference>
<dbReference type="FunFam" id="3.40.140.20:FF:000002">
    <property type="entry name" value="Bifunctional purine biosynthesis protein PurH"/>
    <property type="match status" value="1"/>
</dbReference>
<dbReference type="FunFam" id="3.40.50.1380:FF:000001">
    <property type="entry name" value="Bifunctional purine biosynthesis protein PurH"/>
    <property type="match status" value="1"/>
</dbReference>
<dbReference type="Gene3D" id="3.40.140.20">
    <property type="match status" value="2"/>
</dbReference>
<dbReference type="Gene3D" id="3.40.50.1380">
    <property type="entry name" value="Methylglyoxal synthase-like domain"/>
    <property type="match status" value="1"/>
</dbReference>
<dbReference type="HAMAP" id="MF_00139">
    <property type="entry name" value="PurH"/>
    <property type="match status" value="1"/>
</dbReference>
<dbReference type="InterPro" id="IPR024051">
    <property type="entry name" value="AICAR_Tfase_dup_dom_sf"/>
</dbReference>
<dbReference type="InterPro" id="IPR016193">
    <property type="entry name" value="Cytidine_deaminase-like"/>
</dbReference>
<dbReference type="InterPro" id="IPR011607">
    <property type="entry name" value="MGS-like_dom"/>
</dbReference>
<dbReference type="InterPro" id="IPR036914">
    <property type="entry name" value="MGS-like_dom_sf"/>
</dbReference>
<dbReference type="InterPro" id="IPR002695">
    <property type="entry name" value="PurH-like"/>
</dbReference>
<dbReference type="NCBIfam" id="NF002049">
    <property type="entry name" value="PRK00881.1"/>
    <property type="match status" value="1"/>
</dbReference>
<dbReference type="NCBIfam" id="TIGR00355">
    <property type="entry name" value="purH"/>
    <property type="match status" value="1"/>
</dbReference>
<dbReference type="PANTHER" id="PTHR11692:SF0">
    <property type="entry name" value="BIFUNCTIONAL PURINE BIOSYNTHESIS PROTEIN ATIC"/>
    <property type="match status" value="1"/>
</dbReference>
<dbReference type="PANTHER" id="PTHR11692">
    <property type="entry name" value="BIFUNCTIONAL PURINE BIOSYNTHESIS PROTEIN PURH"/>
    <property type="match status" value="1"/>
</dbReference>
<dbReference type="Pfam" id="PF01808">
    <property type="entry name" value="AICARFT_IMPCHas"/>
    <property type="match status" value="1"/>
</dbReference>
<dbReference type="Pfam" id="PF02142">
    <property type="entry name" value="MGS"/>
    <property type="match status" value="1"/>
</dbReference>
<dbReference type="PIRSF" id="PIRSF000414">
    <property type="entry name" value="AICARFT_IMPCHas"/>
    <property type="match status" value="1"/>
</dbReference>
<dbReference type="SMART" id="SM00798">
    <property type="entry name" value="AICARFT_IMPCHas"/>
    <property type="match status" value="1"/>
</dbReference>
<dbReference type="SMART" id="SM00851">
    <property type="entry name" value="MGS"/>
    <property type="match status" value="1"/>
</dbReference>
<dbReference type="SUPFAM" id="SSF53927">
    <property type="entry name" value="Cytidine deaminase-like"/>
    <property type="match status" value="1"/>
</dbReference>
<dbReference type="SUPFAM" id="SSF52335">
    <property type="entry name" value="Methylglyoxal synthase-like"/>
    <property type="match status" value="1"/>
</dbReference>
<dbReference type="PROSITE" id="PS51855">
    <property type="entry name" value="MGS"/>
    <property type="match status" value="1"/>
</dbReference>
<sequence length="529" mass="57425">MQQRRPVRRALLSVSDKAGIIEFAQALSARGVELLSTGGTARLLAEKGLPVTEVSDYTGFPEMMDGRVKTLHPKVHGGILGRRGQDDAIMEQHHIAPIDMVVVNLYLFAETVAREGCSLEDAVENIDIGGPTMVRSAAKNHKDVAIVVKSSDYDAIIKEMDANEGSLTLDTRFDLAIKAFEHTAAYDSMIANYFGSMVPAYHGESKEAAGRFPRTLNLNFIKKQDMRYGENSHQQAAFYIEENVKEASVATAQQVQGKALSYNNIADTDAALECVKAFNEPACVIVKHANPCGVAVSTSILDAYDRAYKTDPTSAFGGIIAFNRELDAETAQAIISRQFVEVIIAPSATEEALKITAAKQNVRVLTCGQWAQRVPGLDFKRVNGGLLVQDRDLGMVSEAELRVVSKRQPTEQELRDALFCWKVAKFVKSNAIVYAKENMTIGIGAGQMSRVYSAKIAGIKAADEGLEVKGSAMASDAFFPFRDGIDAAAAVGVSCVIQPGGSIRDEEVIAAADEHGIAMIFTDMRHFRH</sequence>
<name>PUR9_SALPC</name>
<comment type="catalytic activity">
    <reaction evidence="1">
        <text>(6R)-10-formyltetrahydrofolate + 5-amino-1-(5-phospho-beta-D-ribosyl)imidazole-4-carboxamide = 5-formamido-1-(5-phospho-D-ribosyl)imidazole-4-carboxamide + (6S)-5,6,7,8-tetrahydrofolate</text>
        <dbReference type="Rhea" id="RHEA:22192"/>
        <dbReference type="ChEBI" id="CHEBI:57453"/>
        <dbReference type="ChEBI" id="CHEBI:58467"/>
        <dbReference type="ChEBI" id="CHEBI:58475"/>
        <dbReference type="ChEBI" id="CHEBI:195366"/>
        <dbReference type="EC" id="2.1.2.3"/>
    </reaction>
</comment>
<comment type="catalytic activity">
    <reaction evidence="1">
        <text>IMP + H2O = 5-formamido-1-(5-phospho-D-ribosyl)imidazole-4-carboxamide</text>
        <dbReference type="Rhea" id="RHEA:18445"/>
        <dbReference type="ChEBI" id="CHEBI:15377"/>
        <dbReference type="ChEBI" id="CHEBI:58053"/>
        <dbReference type="ChEBI" id="CHEBI:58467"/>
        <dbReference type="EC" id="3.5.4.10"/>
    </reaction>
</comment>
<comment type="pathway">
    <text evidence="1">Purine metabolism; IMP biosynthesis via de novo pathway; 5-formamido-1-(5-phospho-D-ribosyl)imidazole-4-carboxamide from 5-amino-1-(5-phospho-D-ribosyl)imidazole-4-carboxamide (10-formyl THF route): step 1/1.</text>
</comment>
<comment type="pathway">
    <text evidence="1">Purine metabolism; IMP biosynthesis via de novo pathway; IMP from 5-formamido-1-(5-phospho-D-ribosyl)imidazole-4-carboxamide: step 1/1.</text>
</comment>
<comment type="domain">
    <text evidence="1">The IMP cyclohydrolase activity resides in the N-terminal region.</text>
</comment>
<comment type="similarity">
    <text evidence="1">Belongs to the PurH family.</text>
</comment>
<gene>
    <name evidence="1" type="primary">purH</name>
    <name type="ordered locus">SPC_4007</name>
</gene>
<accession>C0Q2T8</accession>
<evidence type="ECO:0000255" key="1">
    <source>
        <dbReference type="HAMAP-Rule" id="MF_00139"/>
    </source>
</evidence>
<evidence type="ECO:0000255" key="2">
    <source>
        <dbReference type="PROSITE-ProRule" id="PRU01202"/>
    </source>
</evidence>
<feature type="chain" id="PRO_1000122970" description="Bifunctional purine biosynthesis protein PurH">
    <location>
        <begin position="1"/>
        <end position="529"/>
    </location>
</feature>
<feature type="domain" description="MGS-like" evidence="2">
    <location>
        <begin position="1"/>
        <end position="148"/>
    </location>
</feature>
<protein>
    <recommendedName>
        <fullName evidence="1">Bifunctional purine biosynthesis protein PurH</fullName>
    </recommendedName>
    <domain>
        <recommendedName>
            <fullName evidence="1">Phosphoribosylaminoimidazolecarboxamide formyltransferase</fullName>
            <ecNumber evidence="1">2.1.2.3</ecNumber>
        </recommendedName>
        <alternativeName>
            <fullName evidence="1">AICAR transformylase</fullName>
        </alternativeName>
    </domain>
    <domain>
        <recommendedName>
            <fullName evidence="1">IMP cyclohydrolase</fullName>
            <ecNumber evidence="1">3.5.4.10</ecNumber>
        </recommendedName>
        <alternativeName>
            <fullName evidence="1">ATIC</fullName>
        </alternativeName>
        <alternativeName>
            <fullName evidence="1">IMP synthase</fullName>
        </alternativeName>
        <alternativeName>
            <fullName evidence="1">Inosinicase</fullName>
        </alternativeName>
    </domain>
</protein>
<proteinExistence type="inferred from homology"/>
<organism>
    <name type="scientific">Salmonella paratyphi C (strain RKS4594)</name>
    <dbReference type="NCBI Taxonomy" id="476213"/>
    <lineage>
        <taxon>Bacteria</taxon>
        <taxon>Pseudomonadati</taxon>
        <taxon>Pseudomonadota</taxon>
        <taxon>Gammaproteobacteria</taxon>
        <taxon>Enterobacterales</taxon>
        <taxon>Enterobacteriaceae</taxon>
        <taxon>Salmonella</taxon>
    </lineage>
</organism>